<accession>Q8XCZ2</accession>
<accession>Q7AGV7</accession>
<proteinExistence type="inferred from homology"/>
<keyword id="KW-1185">Reference proteome</keyword>
<keyword id="KW-0711">Selenium</keyword>
<keyword id="KW-0808">Transferase</keyword>
<reference key="1">
    <citation type="journal article" date="2001" name="Nature">
        <title>Genome sequence of enterohaemorrhagic Escherichia coli O157:H7.</title>
        <authorList>
            <person name="Perna N.T."/>
            <person name="Plunkett G. III"/>
            <person name="Burland V."/>
            <person name="Mau B."/>
            <person name="Glasner J.D."/>
            <person name="Rose D.J."/>
            <person name="Mayhew G.F."/>
            <person name="Evans P.S."/>
            <person name="Gregor J."/>
            <person name="Kirkpatrick H.A."/>
            <person name="Posfai G."/>
            <person name="Hackett J."/>
            <person name="Klink S."/>
            <person name="Boutin A."/>
            <person name="Shao Y."/>
            <person name="Miller L."/>
            <person name="Grotbeck E.J."/>
            <person name="Davis N.W."/>
            <person name="Lim A."/>
            <person name="Dimalanta E.T."/>
            <person name="Potamousis K."/>
            <person name="Apodaca J."/>
            <person name="Anantharaman T.S."/>
            <person name="Lin J."/>
            <person name="Yen G."/>
            <person name="Schwartz D.C."/>
            <person name="Welch R.A."/>
            <person name="Blattner F.R."/>
        </authorList>
    </citation>
    <scope>NUCLEOTIDE SEQUENCE [LARGE SCALE GENOMIC DNA]</scope>
    <source>
        <strain>O157:H7 / EDL933 / ATCC 700927 / EHEC</strain>
    </source>
</reference>
<reference key="2">
    <citation type="journal article" date="2001" name="DNA Res.">
        <title>Complete genome sequence of enterohemorrhagic Escherichia coli O157:H7 and genomic comparison with a laboratory strain K-12.</title>
        <authorList>
            <person name="Hayashi T."/>
            <person name="Makino K."/>
            <person name="Ohnishi M."/>
            <person name="Kurokawa K."/>
            <person name="Ishii K."/>
            <person name="Yokoyama K."/>
            <person name="Han C.-G."/>
            <person name="Ohtsubo E."/>
            <person name="Nakayama K."/>
            <person name="Murata T."/>
            <person name="Tanaka M."/>
            <person name="Tobe T."/>
            <person name="Iida T."/>
            <person name="Takami H."/>
            <person name="Honda T."/>
            <person name="Sasakawa C."/>
            <person name="Ogasawara N."/>
            <person name="Yasunaga T."/>
            <person name="Kuhara S."/>
            <person name="Shiba T."/>
            <person name="Hattori M."/>
            <person name="Shinagawa H."/>
        </authorList>
    </citation>
    <scope>NUCLEOTIDE SEQUENCE [LARGE SCALE GENOMIC DNA]</scope>
    <source>
        <strain>O157:H7 / Sakai / RIMD 0509952 / EHEC</strain>
    </source>
</reference>
<evidence type="ECO:0000255" key="1">
    <source>
        <dbReference type="HAMAP-Rule" id="MF_01622"/>
    </source>
</evidence>
<comment type="function">
    <text evidence="1">Involved in the post-transcriptional modification of the uridine at the wobble position (U34) of tRNA(Lys), tRNA(Glu) and tRNA(Gln). Catalyzes the conversion of 2-thiouridine (S2U-RNA) to 2-selenouridine (Se2U-RNA). Acts in a two-step process involving geranylation of 2-thiouridine (S2U) to S-geranyl-2-thiouridine (geS2U) and subsequent selenation of the latter derivative to 2-selenouridine (Se2U) in the tRNA chain.</text>
</comment>
<comment type="catalytic activity">
    <reaction evidence="1">
        <text>5-methylaminomethyl-2-thiouridine(34) in tRNA + selenophosphate + (2E)-geranyl diphosphate + H2O + H(+) = 5-methylaminomethyl-2-selenouridine(34) in tRNA + (2E)-thiogeraniol + phosphate + diphosphate</text>
        <dbReference type="Rhea" id="RHEA:42716"/>
        <dbReference type="Rhea" id="RHEA-COMP:10195"/>
        <dbReference type="Rhea" id="RHEA-COMP:10196"/>
        <dbReference type="ChEBI" id="CHEBI:15377"/>
        <dbReference type="ChEBI" id="CHEBI:15378"/>
        <dbReference type="ChEBI" id="CHEBI:16144"/>
        <dbReference type="ChEBI" id="CHEBI:33019"/>
        <dbReference type="ChEBI" id="CHEBI:43474"/>
        <dbReference type="ChEBI" id="CHEBI:58057"/>
        <dbReference type="ChEBI" id="CHEBI:74455"/>
        <dbReference type="ChEBI" id="CHEBI:82743"/>
        <dbReference type="ChEBI" id="CHEBI:143703"/>
        <dbReference type="EC" id="2.9.1.3"/>
    </reaction>
    <physiologicalReaction direction="left-to-right" evidence="1">
        <dbReference type="Rhea" id="RHEA:42717"/>
    </physiologicalReaction>
</comment>
<comment type="catalytic activity">
    <reaction evidence="1">
        <text>5-methylaminomethyl-2-thiouridine(34) in tRNA + (2E)-geranyl diphosphate = 5-methylaminomethyl-S-(2E)-geranyl-thiouridine(34) in tRNA + diphosphate</text>
        <dbReference type="Rhea" id="RHEA:14085"/>
        <dbReference type="Rhea" id="RHEA-COMP:10195"/>
        <dbReference type="Rhea" id="RHEA-COMP:14654"/>
        <dbReference type="ChEBI" id="CHEBI:33019"/>
        <dbReference type="ChEBI" id="CHEBI:58057"/>
        <dbReference type="ChEBI" id="CHEBI:74455"/>
        <dbReference type="ChEBI" id="CHEBI:140632"/>
    </reaction>
    <physiologicalReaction direction="left-to-right" evidence="1">
        <dbReference type="Rhea" id="RHEA:14086"/>
    </physiologicalReaction>
</comment>
<comment type="catalytic activity">
    <reaction evidence="1">
        <text>5-methylaminomethyl-S-(2E)-geranyl-thiouridine(34) in tRNA + selenophosphate + H(+) = 5-methylaminomethyl-2-(Se-phospho)selenouridine(34) in tRNA + (2E)-thiogeraniol</text>
        <dbReference type="Rhea" id="RHEA:60172"/>
        <dbReference type="Rhea" id="RHEA-COMP:14654"/>
        <dbReference type="Rhea" id="RHEA-COMP:15523"/>
        <dbReference type="ChEBI" id="CHEBI:15378"/>
        <dbReference type="ChEBI" id="CHEBI:16144"/>
        <dbReference type="ChEBI" id="CHEBI:140632"/>
        <dbReference type="ChEBI" id="CHEBI:143702"/>
        <dbReference type="ChEBI" id="CHEBI:143703"/>
    </reaction>
    <physiologicalReaction direction="left-to-right" evidence="1">
        <dbReference type="Rhea" id="RHEA:60173"/>
    </physiologicalReaction>
</comment>
<comment type="catalytic activity">
    <reaction evidence="1">
        <text>5-methylaminomethyl-2-(Se-phospho)selenouridine(34) in tRNA + H2O = 5-methylaminomethyl-2-selenouridine(34) in tRNA + phosphate</text>
        <dbReference type="Rhea" id="RHEA:60176"/>
        <dbReference type="Rhea" id="RHEA-COMP:10196"/>
        <dbReference type="Rhea" id="RHEA-COMP:15523"/>
        <dbReference type="ChEBI" id="CHEBI:15377"/>
        <dbReference type="ChEBI" id="CHEBI:43474"/>
        <dbReference type="ChEBI" id="CHEBI:82743"/>
        <dbReference type="ChEBI" id="CHEBI:143702"/>
    </reaction>
    <physiologicalReaction direction="left-to-right" evidence="1">
        <dbReference type="Rhea" id="RHEA:60177"/>
    </physiologicalReaction>
</comment>
<comment type="subunit">
    <text evidence="1">Monomer.</text>
</comment>
<comment type="similarity">
    <text evidence="1">Belongs to the SelU family.</text>
</comment>
<name>SELU_ECO57</name>
<protein>
    <recommendedName>
        <fullName evidence="1">tRNA 2-selenouridine synthase</fullName>
        <ecNumber evidence="1">2.9.1.3</ecNumber>
    </recommendedName>
</protein>
<dbReference type="EC" id="2.9.1.3" evidence="1"/>
<dbReference type="EMBL" id="AE005174">
    <property type="protein sequence ID" value="AAG54859.1"/>
    <property type="molecule type" value="Genomic_DNA"/>
</dbReference>
<dbReference type="EMBL" id="BA000007">
    <property type="protein sequence ID" value="BAB33987.1"/>
    <property type="molecule type" value="Genomic_DNA"/>
</dbReference>
<dbReference type="PIR" id="D90699">
    <property type="entry name" value="D90699"/>
</dbReference>
<dbReference type="PIR" id="G85549">
    <property type="entry name" value="G85549"/>
</dbReference>
<dbReference type="SMR" id="Q8XCZ2"/>
<dbReference type="STRING" id="155864.Z0657"/>
<dbReference type="KEGG" id="ece:Z0657"/>
<dbReference type="KEGG" id="ecs:ECs_0564"/>
<dbReference type="PATRIC" id="fig|386585.9.peg.672"/>
<dbReference type="eggNOG" id="COG2603">
    <property type="taxonomic scope" value="Bacteria"/>
</dbReference>
<dbReference type="HOGENOM" id="CLU_043456_1_0_6"/>
<dbReference type="OMA" id="RPLVYCW"/>
<dbReference type="Proteomes" id="UP000000558">
    <property type="component" value="Chromosome"/>
</dbReference>
<dbReference type="Proteomes" id="UP000002519">
    <property type="component" value="Chromosome"/>
</dbReference>
<dbReference type="GO" id="GO:0016765">
    <property type="term" value="F:transferase activity, transferring alkyl or aryl (other than methyl) groups"/>
    <property type="evidence" value="ECO:0007669"/>
    <property type="project" value="UniProtKB-UniRule"/>
</dbReference>
<dbReference type="GO" id="GO:0043828">
    <property type="term" value="F:tRNA 2-selenouridine synthase activity"/>
    <property type="evidence" value="ECO:0007669"/>
    <property type="project" value="UniProtKB-EC"/>
</dbReference>
<dbReference type="GO" id="GO:0002098">
    <property type="term" value="P:tRNA wobble uridine modification"/>
    <property type="evidence" value="ECO:0007669"/>
    <property type="project" value="UniProtKB-UniRule"/>
</dbReference>
<dbReference type="CDD" id="cd01520">
    <property type="entry name" value="RHOD_YbbB"/>
    <property type="match status" value="1"/>
</dbReference>
<dbReference type="FunFam" id="3.40.250.10:FF:000009">
    <property type="entry name" value="tRNA 2-selenouridine/geranyl-2-thiouridine synthase"/>
    <property type="match status" value="1"/>
</dbReference>
<dbReference type="Gene3D" id="3.40.250.10">
    <property type="entry name" value="Rhodanese-like domain"/>
    <property type="match status" value="1"/>
</dbReference>
<dbReference type="HAMAP" id="MF_01622">
    <property type="entry name" value="tRNA_sel_U_synth"/>
    <property type="match status" value="1"/>
</dbReference>
<dbReference type="InterPro" id="IPR001763">
    <property type="entry name" value="Rhodanese-like_dom"/>
</dbReference>
<dbReference type="InterPro" id="IPR036873">
    <property type="entry name" value="Rhodanese-like_dom_sf"/>
</dbReference>
<dbReference type="InterPro" id="IPR017582">
    <property type="entry name" value="SelU"/>
</dbReference>
<dbReference type="NCBIfam" id="NF008749">
    <property type="entry name" value="PRK11784.1-1"/>
    <property type="match status" value="1"/>
</dbReference>
<dbReference type="NCBIfam" id="NF008751">
    <property type="entry name" value="PRK11784.1-3"/>
    <property type="match status" value="1"/>
</dbReference>
<dbReference type="NCBIfam" id="TIGR03167">
    <property type="entry name" value="tRNA_sel_U_synt"/>
    <property type="match status" value="1"/>
</dbReference>
<dbReference type="PANTHER" id="PTHR30401">
    <property type="entry name" value="TRNA 2-SELENOURIDINE SYNTHASE"/>
    <property type="match status" value="1"/>
</dbReference>
<dbReference type="PANTHER" id="PTHR30401:SF0">
    <property type="entry name" value="TRNA 2-SELENOURIDINE SYNTHASE"/>
    <property type="match status" value="1"/>
</dbReference>
<dbReference type="Pfam" id="PF00581">
    <property type="entry name" value="Rhodanese"/>
    <property type="match status" value="1"/>
</dbReference>
<dbReference type="SMART" id="SM00450">
    <property type="entry name" value="RHOD"/>
    <property type="match status" value="1"/>
</dbReference>
<dbReference type="SUPFAM" id="SSF52821">
    <property type="entry name" value="Rhodanese/Cell cycle control phosphatase"/>
    <property type="match status" value="1"/>
</dbReference>
<dbReference type="PROSITE" id="PS50206">
    <property type="entry name" value="RHODANESE_3"/>
    <property type="match status" value="1"/>
</dbReference>
<feature type="chain" id="PRO_0000210860" description="tRNA 2-selenouridine synthase">
    <location>
        <begin position="1"/>
        <end position="364"/>
    </location>
</feature>
<feature type="domain" description="Rhodanese" evidence="1">
    <location>
        <begin position="14"/>
        <end position="137"/>
    </location>
</feature>
<feature type="active site" description="S-selanylcysteine intermediate" evidence="1">
    <location>
        <position position="97"/>
    </location>
</feature>
<organism>
    <name type="scientific">Escherichia coli O157:H7</name>
    <dbReference type="NCBI Taxonomy" id="83334"/>
    <lineage>
        <taxon>Bacteria</taxon>
        <taxon>Pseudomonadati</taxon>
        <taxon>Pseudomonadota</taxon>
        <taxon>Gammaproteobacteria</taxon>
        <taxon>Enterobacterales</taxon>
        <taxon>Enterobacteriaceae</taxon>
        <taxon>Escherichia</taxon>
    </lineage>
</organism>
<sequence>MQERHTEQDYRALLIADTPIIDVRAPIEFEQGAMPAAINLPLMNNDERAAVGTCYKQQGSDAALALGHKLVAGEIRQQRMDAWRAACLQNPQGILCCARGGQRSHIVQSWLHAAGIDYPLVEGGYKALRQTAIQATIELAQKPIVLIGGCTGSGKTLLVQQQPNGVDLEGLARHRGSAFGRTLQPQLSQASFENLLAAEMLKTDARQNLRLWVLEDESRMIGSNHLPECLRERMTQAAIAVVEDPFEIRLERLNEEYFLRMHHDFTHAYGDEQGWQEYCEYLHHGLSAIKRRLGLQRYNELAARLDAALTTQLTTGSTDGHLAWLVPLLEEYYDPMYRYQLEKKAEKVVFRGEWAEVAEWVKAQ</sequence>
<gene>
    <name evidence="1" type="primary">selU</name>
    <name type="ordered locus">Z0657</name>
    <name type="ordered locus">ECs0564</name>
</gene>